<organism>
    <name type="scientific">Hahella chejuensis (strain KCTC 2396)</name>
    <dbReference type="NCBI Taxonomy" id="349521"/>
    <lineage>
        <taxon>Bacteria</taxon>
        <taxon>Pseudomonadati</taxon>
        <taxon>Pseudomonadota</taxon>
        <taxon>Gammaproteobacteria</taxon>
        <taxon>Oceanospirillales</taxon>
        <taxon>Hahellaceae</taxon>
        <taxon>Hahella</taxon>
    </lineage>
</organism>
<accession>Q2SBG3</accession>
<dbReference type="EC" id="2.8.4.4" evidence="1"/>
<dbReference type="EMBL" id="CP000155">
    <property type="protein sequence ID" value="ABC32011.1"/>
    <property type="molecule type" value="Genomic_DNA"/>
</dbReference>
<dbReference type="RefSeq" id="WP_011399075.1">
    <property type="nucleotide sequence ID" value="NC_007645.1"/>
</dbReference>
<dbReference type="SMR" id="Q2SBG3"/>
<dbReference type="STRING" id="349521.HCH_05339"/>
<dbReference type="KEGG" id="hch:HCH_05339"/>
<dbReference type="eggNOG" id="COG0621">
    <property type="taxonomic scope" value="Bacteria"/>
</dbReference>
<dbReference type="HOGENOM" id="CLU_018697_0_0_6"/>
<dbReference type="OrthoDB" id="9805215at2"/>
<dbReference type="Proteomes" id="UP000000238">
    <property type="component" value="Chromosome"/>
</dbReference>
<dbReference type="GO" id="GO:0005829">
    <property type="term" value="C:cytosol"/>
    <property type="evidence" value="ECO:0007669"/>
    <property type="project" value="TreeGrafter"/>
</dbReference>
<dbReference type="GO" id="GO:0051539">
    <property type="term" value="F:4 iron, 4 sulfur cluster binding"/>
    <property type="evidence" value="ECO:0007669"/>
    <property type="project" value="UniProtKB-UniRule"/>
</dbReference>
<dbReference type="GO" id="GO:0035599">
    <property type="term" value="F:aspartic acid methylthiotransferase activity"/>
    <property type="evidence" value="ECO:0007669"/>
    <property type="project" value="TreeGrafter"/>
</dbReference>
<dbReference type="GO" id="GO:0046872">
    <property type="term" value="F:metal ion binding"/>
    <property type="evidence" value="ECO:0007669"/>
    <property type="project" value="UniProtKB-KW"/>
</dbReference>
<dbReference type="GO" id="GO:0103039">
    <property type="term" value="F:protein methylthiotransferase activity"/>
    <property type="evidence" value="ECO:0007669"/>
    <property type="project" value="UniProtKB-EC"/>
</dbReference>
<dbReference type="GO" id="GO:0006400">
    <property type="term" value="P:tRNA modification"/>
    <property type="evidence" value="ECO:0007669"/>
    <property type="project" value="InterPro"/>
</dbReference>
<dbReference type="CDD" id="cd01335">
    <property type="entry name" value="Radical_SAM"/>
    <property type="match status" value="1"/>
</dbReference>
<dbReference type="FunFam" id="2.40.50.140:FF:000060">
    <property type="entry name" value="Ribosomal protein S12 methylthiotransferase RimO"/>
    <property type="match status" value="1"/>
</dbReference>
<dbReference type="FunFam" id="3.40.50.12160:FF:000002">
    <property type="entry name" value="Ribosomal protein S12 methylthiotransferase RimO"/>
    <property type="match status" value="1"/>
</dbReference>
<dbReference type="FunFam" id="3.80.30.20:FF:000001">
    <property type="entry name" value="tRNA-2-methylthio-N(6)-dimethylallyladenosine synthase 2"/>
    <property type="match status" value="1"/>
</dbReference>
<dbReference type="Gene3D" id="3.40.50.12160">
    <property type="entry name" value="Methylthiotransferase, N-terminal domain"/>
    <property type="match status" value="1"/>
</dbReference>
<dbReference type="Gene3D" id="2.40.50.140">
    <property type="entry name" value="Nucleic acid-binding proteins"/>
    <property type="match status" value="1"/>
</dbReference>
<dbReference type="Gene3D" id="3.80.30.20">
    <property type="entry name" value="tm_1862 like domain"/>
    <property type="match status" value="1"/>
</dbReference>
<dbReference type="HAMAP" id="MF_01865">
    <property type="entry name" value="MTTase_RimO"/>
    <property type="match status" value="1"/>
</dbReference>
<dbReference type="InterPro" id="IPR006638">
    <property type="entry name" value="Elp3/MiaA/NifB-like_rSAM"/>
</dbReference>
<dbReference type="InterPro" id="IPR005839">
    <property type="entry name" value="Methylthiotransferase"/>
</dbReference>
<dbReference type="InterPro" id="IPR020612">
    <property type="entry name" value="Methylthiotransferase_CS"/>
</dbReference>
<dbReference type="InterPro" id="IPR013848">
    <property type="entry name" value="Methylthiotransferase_N"/>
</dbReference>
<dbReference type="InterPro" id="IPR038135">
    <property type="entry name" value="Methylthiotransferase_N_sf"/>
</dbReference>
<dbReference type="InterPro" id="IPR012340">
    <property type="entry name" value="NA-bd_OB-fold"/>
</dbReference>
<dbReference type="InterPro" id="IPR005840">
    <property type="entry name" value="Ribosomal_uS12_MeSTrfase_RimO"/>
</dbReference>
<dbReference type="InterPro" id="IPR007197">
    <property type="entry name" value="rSAM"/>
</dbReference>
<dbReference type="InterPro" id="IPR023404">
    <property type="entry name" value="rSAM_horseshoe"/>
</dbReference>
<dbReference type="InterPro" id="IPR002792">
    <property type="entry name" value="TRAM_dom"/>
</dbReference>
<dbReference type="NCBIfam" id="TIGR01125">
    <property type="entry name" value="30S ribosomal protein S12 methylthiotransferase RimO"/>
    <property type="match status" value="1"/>
</dbReference>
<dbReference type="NCBIfam" id="TIGR00089">
    <property type="entry name" value="MiaB/RimO family radical SAM methylthiotransferase"/>
    <property type="match status" value="1"/>
</dbReference>
<dbReference type="PANTHER" id="PTHR43837">
    <property type="entry name" value="RIBOSOMAL PROTEIN S12 METHYLTHIOTRANSFERASE RIMO"/>
    <property type="match status" value="1"/>
</dbReference>
<dbReference type="PANTHER" id="PTHR43837:SF1">
    <property type="entry name" value="RIBOSOMAL PROTEIN US12 METHYLTHIOTRANSFERASE RIMO"/>
    <property type="match status" value="1"/>
</dbReference>
<dbReference type="Pfam" id="PF04055">
    <property type="entry name" value="Radical_SAM"/>
    <property type="match status" value="1"/>
</dbReference>
<dbReference type="Pfam" id="PF18693">
    <property type="entry name" value="TRAM_2"/>
    <property type="match status" value="1"/>
</dbReference>
<dbReference type="Pfam" id="PF00919">
    <property type="entry name" value="UPF0004"/>
    <property type="match status" value="1"/>
</dbReference>
<dbReference type="SFLD" id="SFLDG01082">
    <property type="entry name" value="B12-binding_domain_containing"/>
    <property type="match status" value="1"/>
</dbReference>
<dbReference type="SFLD" id="SFLDS00029">
    <property type="entry name" value="Radical_SAM"/>
    <property type="match status" value="1"/>
</dbReference>
<dbReference type="SFLD" id="SFLDF00274">
    <property type="entry name" value="ribosomal_protein_S12_methylth"/>
    <property type="match status" value="1"/>
</dbReference>
<dbReference type="SMART" id="SM00729">
    <property type="entry name" value="Elp3"/>
    <property type="match status" value="1"/>
</dbReference>
<dbReference type="SUPFAM" id="SSF102114">
    <property type="entry name" value="Radical SAM enzymes"/>
    <property type="match status" value="1"/>
</dbReference>
<dbReference type="PROSITE" id="PS51449">
    <property type="entry name" value="MTTASE_N"/>
    <property type="match status" value="1"/>
</dbReference>
<dbReference type="PROSITE" id="PS01278">
    <property type="entry name" value="MTTASE_RADICAL"/>
    <property type="match status" value="1"/>
</dbReference>
<dbReference type="PROSITE" id="PS51918">
    <property type="entry name" value="RADICAL_SAM"/>
    <property type="match status" value="1"/>
</dbReference>
<dbReference type="PROSITE" id="PS50926">
    <property type="entry name" value="TRAM"/>
    <property type="match status" value="1"/>
</dbReference>
<gene>
    <name evidence="1" type="primary">rimO</name>
    <name type="ordered locus">HCH_05339</name>
</gene>
<sequence length="439" mass="49144">MSSSSGKVGFVSLGCPKNTVDSERILTQLRTEGYEISASYEDADVVLVNTCGFIDSAVQESLDAIGEALRENGKVIVTGCLGAKEDVIREVHPKVLAVSGPHAYTEVMNQVHQVAPKPEYNPFVNLVPDTGVKLTPKHYAYLKISEGCNHRCTFCIIPSFRGDLVSRPIGDVLGEAQRLVKNGVKELLVISQDTSAYGVDTKYRTGFWEGRPVKTRMKELCDELGRMGVWVRLHYVYPYPHVDDVIPLMADGKILPYLDIPFQHASPSVLKNMRRPAHAEKVLHRIGKWREQCPDITLRSTFIVGFPGETEEDFQTLLNFLEEAQLDRVGCFKYSPVEGATANELPDPVEEVVKQERWERFMEVQQRISASRLQAKIGKRMDVIVDEVVEEGAVCRSKADAPEIDGQVFLDNQTHLKPGDLVTVEIEDADEYDLWGRPV</sequence>
<reference key="1">
    <citation type="journal article" date="2005" name="Nucleic Acids Res.">
        <title>Genomic blueprint of Hahella chejuensis, a marine microbe producing an algicidal agent.</title>
        <authorList>
            <person name="Jeong H."/>
            <person name="Yim J.H."/>
            <person name="Lee C."/>
            <person name="Choi S.-H."/>
            <person name="Park Y.K."/>
            <person name="Yoon S.H."/>
            <person name="Hur C.-G."/>
            <person name="Kang H.-Y."/>
            <person name="Kim D."/>
            <person name="Lee H.H."/>
            <person name="Park K.H."/>
            <person name="Park S.-H."/>
            <person name="Park H.-S."/>
            <person name="Lee H.K."/>
            <person name="Oh T.K."/>
            <person name="Kim J.F."/>
        </authorList>
    </citation>
    <scope>NUCLEOTIDE SEQUENCE [LARGE SCALE GENOMIC DNA]</scope>
    <source>
        <strain>KCTC 2396</strain>
    </source>
</reference>
<evidence type="ECO:0000255" key="1">
    <source>
        <dbReference type="HAMAP-Rule" id="MF_01865"/>
    </source>
</evidence>
<evidence type="ECO:0000255" key="2">
    <source>
        <dbReference type="PROSITE-ProRule" id="PRU01266"/>
    </source>
</evidence>
<proteinExistence type="inferred from homology"/>
<feature type="chain" id="PRO_0000374853" description="Ribosomal protein uS12 methylthiotransferase RimO">
    <location>
        <begin position="1"/>
        <end position="439"/>
    </location>
</feature>
<feature type="domain" description="MTTase N-terminal" evidence="1">
    <location>
        <begin position="6"/>
        <end position="116"/>
    </location>
</feature>
<feature type="domain" description="Radical SAM core" evidence="2">
    <location>
        <begin position="134"/>
        <end position="371"/>
    </location>
</feature>
<feature type="domain" description="TRAM" evidence="1">
    <location>
        <begin position="374"/>
        <end position="439"/>
    </location>
</feature>
<feature type="binding site" evidence="1">
    <location>
        <position position="15"/>
    </location>
    <ligand>
        <name>[4Fe-4S] cluster</name>
        <dbReference type="ChEBI" id="CHEBI:49883"/>
        <label>1</label>
    </ligand>
</feature>
<feature type="binding site" evidence="1">
    <location>
        <position position="51"/>
    </location>
    <ligand>
        <name>[4Fe-4S] cluster</name>
        <dbReference type="ChEBI" id="CHEBI:49883"/>
        <label>1</label>
    </ligand>
</feature>
<feature type="binding site" evidence="1">
    <location>
        <position position="80"/>
    </location>
    <ligand>
        <name>[4Fe-4S] cluster</name>
        <dbReference type="ChEBI" id="CHEBI:49883"/>
        <label>1</label>
    </ligand>
</feature>
<feature type="binding site" evidence="1">
    <location>
        <position position="148"/>
    </location>
    <ligand>
        <name>[4Fe-4S] cluster</name>
        <dbReference type="ChEBI" id="CHEBI:49883"/>
        <label>2</label>
        <note>4Fe-4S-S-AdoMet</note>
    </ligand>
</feature>
<feature type="binding site" evidence="1">
    <location>
        <position position="152"/>
    </location>
    <ligand>
        <name>[4Fe-4S] cluster</name>
        <dbReference type="ChEBI" id="CHEBI:49883"/>
        <label>2</label>
        <note>4Fe-4S-S-AdoMet</note>
    </ligand>
</feature>
<feature type="binding site" evidence="1">
    <location>
        <position position="155"/>
    </location>
    <ligand>
        <name>[4Fe-4S] cluster</name>
        <dbReference type="ChEBI" id="CHEBI:49883"/>
        <label>2</label>
        <note>4Fe-4S-S-AdoMet</note>
    </ligand>
</feature>
<keyword id="KW-0004">4Fe-4S</keyword>
<keyword id="KW-0963">Cytoplasm</keyword>
<keyword id="KW-0408">Iron</keyword>
<keyword id="KW-0411">Iron-sulfur</keyword>
<keyword id="KW-0479">Metal-binding</keyword>
<keyword id="KW-1185">Reference proteome</keyword>
<keyword id="KW-0949">S-adenosyl-L-methionine</keyword>
<keyword id="KW-0808">Transferase</keyword>
<comment type="function">
    <text evidence="1">Catalyzes the methylthiolation of an aspartic acid residue of ribosomal protein uS12.</text>
</comment>
<comment type="catalytic activity">
    <reaction evidence="1">
        <text>L-aspartate(89)-[ribosomal protein uS12]-hydrogen + (sulfur carrier)-SH + AH2 + 2 S-adenosyl-L-methionine = 3-methylsulfanyl-L-aspartate(89)-[ribosomal protein uS12]-hydrogen + (sulfur carrier)-H + 5'-deoxyadenosine + L-methionine + A + S-adenosyl-L-homocysteine + 2 H(+)</text>
        <dbReference type="Rhea" id="RHEA:37087"/>
        <dbReference type="Rhea" id="RHEA-COMP:10460"/>
        <dbReference type="Rhea" id="RHEA-COMP:10461"/>
        <dbReference type="Rhea" id="RHEA-COMP:14737"/>
        <dbReference type="Rhea" id="RHEA-COMP:14739"/>
        <dbReference type="ChEBI" id="CHEBI:13193"/>
        <dbReference type="ChEBI" id="CHEBI:15378"/>
        <dbReference type="ChEBI" id="CHEBI:17319"/>
        <dbReference type="ChEBI" id="CHEBI:17499"/>
        <dbReference type="ChEBI" id="CHEBI:29917"/>
        <dbReference type="ChEBI" id="CHEBI:29961"/>
        <dbReference type="ChEBI" id="CHEBI:57844"/>
        <dbReference type="ChEBI" id="CHEBI:57856"/>
        <dbReference type="ChEBI" id="CHEBI:59789"/>
        <dbReference type="ChEBI" id="CHEBI:64428"/>
        <dbReference type="ChEBI" id="CHEBI:73599"/>
        <dbReference type="EC" id="2.8.4.4"/>
    </reaction>
</comment>
<comment type="cofactor">
    <cofactor evidence="1">
        <name>[4Fe-4S] cluster</name>
        <dbReference type="ChEBI" id="CHEBI:49883"/>
    </cofactor>
    <text evidence="1">Binds 2 [4Fe-4S] clusters. One cluster is coordinated with 3 cysteines and an exchangeable S-adenosyl-L-methionine.</text>
</comment>
<comment type="subcellular location">
    <subcellularLocation>
        <location evidence="1">Cytoplasm</location>
    </subcellularLocation>
</comment>
<comment type="similarity">
    <text evidence="1">Belongs to the methylthiotransferase family. RimO subfamily.</text>
</comment>
<protein>
    <recommendedName>
        <fullName evidence="1">Ribosomal protein uS12 methylthiotransferase RimO</fullName>
        <shortName evidence="1">uS12 MTTase</shortName>
        <shortName evidence="1">uS12 methylthiotransferase</shortName>
        <ecNumber evidence="1">2.8.4.4</ecNumber>
    </recommendedName>
    <alternativeName>
        <fullName evidence="1">Ribosomal protein uS12 (aspartate-C(3))-methylthiotransferase</fullName>
    </alternativeName>
    <alternativeName>
        <fullName evidence="1">Ribosome maturation factor RimO</fullName>
    </alternativeName>
</protein>
<name>RIMO_HAHCH</name>